<gene>
    <name type="primary">rluA</name>
    <name type="ordered locus">PM1836</name>
</gene>
<evidence type="ECO:0000250" key="1">
    <source>
        <dbReference type="UniProtKB" id="P0AA37"/>
    </source>
</evidence>
<evidence type="ECO:0000305" key="2"/>
<dbReference type="EC" id="5.4.99.28" evidence="1"/>
<dbReference type="EC" id="5.4.99.29" evidence="1"/>
<dbReference type="EMBL" id="AE004439">
    <property type="protein sequence ID" value="AAK03920.1"/>
    <property type="molecule type" value="Genomic_DNA"/>
</dbReference>
<dbReference type="RefSeq" id="WP_010907369.1">
    <property type="nucleotide sequence ID" value="NC_002663.1"/>
</dbReference>
<dbReference type="SMR" id="Q9CK02"/>
<dbReference type="STRING" id="272843.PM1836"/>
<dbReference type="EnsemblBacteria" id="AAK03920">
    <property type="protein sequence ID" value="AAK03920"/>
    <property type="gene ID" value="PM1836"/>
</dbReference>
<dbReference type="KEGG" id="pmu:PM1836"/>
<dbReference type="PATRIC" id="fig|272843.6.peg.1860"/>
<dbReference type="HOGENOM" id="CLU_016902_11_1_6"/>
<dbReference type="OrthoDB" id="9807829at2"/>
<dbReference type="Proteomes" id="UP000000809">
    <property type="component" value="Chromosome"/>
</dbReference>
<dbReference type="GO" id="GO:0160142">
    <property type="term" value="F:23S rRNA pseudouridine(746) synthase activity"/>
    <property type="evidence" value="ECO:0007669"/>
    <property type="project" value="UniProtKB-EC"/>
</dbReference>
<dbReference type="GO" id="GO:0003723">
    <property type="term" value="F:RNA binding"/>
    <property type="evidence" value="ECO:0007669"/>
    <property type="project" value="InterPro"/>
</dbReference>
<dbReference type="GO" id="GO:0160151">
    <property type="term" value="F:tRNA pseudouridine(32) synthase activity"/>
    <property type="evidence" value="ECO:0007669"/>
    <property type="project" value="UniProtKB-EC"/>
</dbReference>
<dbReference type="GO" id="GO:0000455">
    <property type="term" value="P:enzyme-directed rRNA pseudouridine synthesis"/>
    <property type="evidence" value="ECO:0007669"/>
    <property type="project" value="TreeGrafter"/>
</dbReference>
<dbReference type="GO" id="GO:0008033">
    <property type="term" value="P:tRNA processing"/>
    <property type="evidence" value="ECO:0007669"/>
    <property type="project" value="UniProtKB-KW"/>
</dbReference>
<dbReference type="CDD" id="cd02869">
    <property type="entry name" value="PseudoU_synth_RluA_like"/>
    <property type="match status" value="1"/>
</dbReference>
<dbReference type="FunFam" id="3.30.2350.10:FF:000005">
    <property type="entry name" value="Pseudouridine synthase"/>
    <property type="match status" value="1"/>
</dbReference>
<dbReference type="Gene3D" id="3.30.2350.10">
    <property type="entry name" value="Pseudouridine synthase"/>
    <property type="match status" value="1"/>
</dbReference>
<dbReference type="InterPro" id="IPR020103">
    <property type="entry name" value="PsdUridine_synth_cat_dom_sf"/>
</dbReference>
<dbReference type="InterPro" id="IPR006224">
    <property type="entry name" value="PsdUridine_synth_RluA-like_CS"/>
</dbReference>
<dbReference type="InterPro" id="IPR006145">
    <property type="entry name" value="PsdUridine_synth_RsuA/RluA"/>
</dbReference>
<dbReference type="InterPro" id="IPR050188">
    <property type="entry name" value="RluA_PseudoU_synthase"/>
</dbReference>
<dbReference type="NCBIfam" id="NF007543">
    <property type="entry name" value="PRK10158.1"/>
    <property type="match status" value="1"/>
</dbReference>
<dbReference type="PANTHER" id="PTHR21600:SF91">
    <property type="entry name" value="DUAL-SPECIFICITY RNA PSEUDOURIDINE SYNTHASE RLUA"/>
    <property type="match status" value="1"/>
</dbReference>
<dbReference type="PANTHER" id="PTHR21600">
    <property type="entry name" value="MITOCHONDRIAL RNA PSEUDOURIDINE SYNTHASE"/>
    <property type="match status" value="1"/>
</dbReference>
<dbReference type="Pfam" id="PF00849">
    <property type="entry name" value="PseudoU_synth_2"/>
    <property type="match status" value="1"/>
</dbReference>
<dbReference type="SUPFAM" id="SSF55120">
    <property type="entry name" value="Pseudouridine synthase"/>
    <property type="match status" value="1"/>
</dbReference>
<dbReference type="PROSITE" id="PS01129">
    <property type="entry name" value="PSI_RLU"/>
    <property type="match status" value="1"/>
</dbReference>
<proteinExistence type="inferred from homology"/>
<feature type="chain" id="PRO_0000162656" description="Dual-specificity RNA pseudouridine synthase RluA">
    <location>
        <begin position="1"/>
        <end position="219"/>
    </location>
</feature>
<feature type="active site" evidence="1">
    <location>
        <position position="64"/>
    </location>
</feature>
<comment type="function">
    <text evidence="1">Dual specificity enzyme that catalyzes the synthesis of pseudouridine from uracil-746 in 23S ribosomal RNA and from uracil-32 in the anticodon stem and loop of transfer RNAs.</text>
</comment>
<comment type="catalytic activity">
    <reaction evidence="1">
        <text>uridine(32) in tRNA = pseudouridine(32) in tRNA</text>
        <dbReference type="Rhea" id="RHEA:42544"/>
        <dbReference type="Rhea" id="RHEA-COMP:10107"/>
        <dbReference type="Rhea" id="RHEA-COMP:10108"/>
        <dbReference type="ChEBI" id="CHEBI:65314"/>
        <dbReference type="ChEBI" id="CHEBI:65315"/>
        <dbReference type="EC" id="5.4.99.28"/>
    </reaction>
</comment>
<comment type="catalytic activity">
    <reaction evidence="1">
        <text>uridine(746) in 23S rRNA = pseudouridine(746) in 23S rRNA</text>
        <dbReference type="Rhea" id="RHEA:42548"/>
        <dbReference type="Rhea" id="RHEA-COMP:10109"/>
        <dbReference type="Rhea" id="RHEA-COMP:10110"/>
        <dbReference type="ChEBI" id="CHEBI:65314"/>
        <dbReference type="ChEBI" id="CHEBI:65315"/>
        <dbReference type="EC" id="5.4.99.29"/>
    </reaction>
</comment>
<comment type="similarity">
    <text evidence="2">Belongs to the pseudouridine synthase RluA family.</text>
</comment>
<protein>
    <recommendedName>
        <fullName evidence="1">Dual-specificity RNA pseudouridine synthase RluA</fullName>
        <ecNumber evidence="1">5.4.99.28</ecNumber>
        <ecNumber evidence="1">5.4.99.29</ecNumber>
    </recommendedName>
    <alternativeName>
        <fullName evidence="1">23S rRNA pseudouridine(746) synthase</fullName>
    </alternativeName>
    <alternativeName>
        <fullName evidence="1">Ribosomal large subunit pseudouridine synthase A</fullName>
    </alternativeName>
    <alternativeName>
        <fullName evidence="1">rRNA pseudouridylate synthase A</fullName>
    </alternativeName>
    <alternativeName>
        <fullName evidence="1">rRNA-uridine isomerase A</fullName>
    </alternativeName>
    <alternativeName>
        <fullName evidence="1">tRNA pseudouridine(32) synthase</fullName>
    </alternativeName>
</protein>
<sequence>MALISYTPPTDPYLDIVHYDDHFVVINKPSGLLSVPGNQPQYYDSAMSRVKEKYGFCEPAHRLDMSTSGLILFALSKVADRELKRQFREREPKKHYQALVWGHLEEDQGEVNLPLICDWENRPRQKICFERGKPALTLYEVLARYPNNTTRVKLTPITGRSHQLRLHMLALGHPILGDKFYAPPQAKALSPRLCLHAEQLAFRHPITQEWLSFSAPPAF</sequence>
<reference key="1">
    <citation type="journal article" date="2001" name="Proc. Natl. Acad. Sci. U.S.A.">
        <title>Complete genomic sequence of Pasteurella multocida Pm70.</title>
        <authorList>
            <person name="May B.J."/>
            <person name="Zhang Q."/>
            <person name="Li L.L."/>
            <person name="Paustian M.L."/>
            <person name="Whittam T.S."/>
            <person name="Kapur V."/>
        </authorList>
    </citation>
    <scope>NUCLEOTIDE SEQUENCE [LARGE SCALE GENOMIC DNA]</scope>
    <source>
        <strain>Pm70</strain>
    </source>
</reference>
<keyword id="KW-0413">Isomerase</keyword>
<keyword id="KW-1185">Reference proteome</keyword>
<keyword id="KW-0698">rRNA processing</keyword>
<keyword id="KW-0819">tRNA processing</keyword>
<accession>Q9CK02</accession>
<organism>
    <name type="scientific">Pasteurella multocida (strain Pm70)</name>
    <dbReference type="NCBI Taxonomy" id="272843"/>
    <lineage>
        <taxon>Bacteria</taxon>
        <taxon>Pseudomonadati</taxon>
        <taxon>Pseudomonadota</taxon>
        <taxon>Gammaproteobacteria</taxon>
        <taxon>Pasteurellales</taxon>
        <taxon>Pasteurellaceae</taxon>
        <taxon>Pasteurella</taxon>
    </lineage>
</organism>
<name>RLUA_PASMU</name>